<accession>Q2J9L3</accession>
<sequence length="288" mass="29334">MSAVIIDGKAVARRVRENVAREVAEFRDRTGIQPGLATVLVGDDPASAVYVGGKRRACVEAGMADLHQHLPADTSQEKVAALLDDLAADPAVSGILLQLPVPEGLDGAALVGRIPPGKDVDGLTTASVGLLARGLPGLRPCTPSGIIELLDSYDVELSGTPTVVVGRSELVGRPVAALLVGRNATLTICHSRTRDLAAVCRGADVLVVAAGKQAIIGADAVKPGATVIDVGMHRTPQGLRGDVDFEAVREVAGKLTPVPGGVGPMTIAMLLRNTLLAAQAATGTDGPG</sequence>
<feature type="chain" id="PRO_0000268355" description="Bifunctional protein FolD 2">
    <location>
        <begin position="1"/>
        <end position="288"/>
    </location>
</feature>
<feature type="binding site" evidence="1">
    <location>
        <begin position="166"/>
        <end position="168"/>
    </location>
    <ligand>
        <name>NADP(+)</name>
        <dbReference type="ChEBI" id="CHEBI:58349"/>
    </ligand>
</feature>
<feature type="binding site" evidence="1">
    <location>
        <position position="191"/>
    </location>
    <ligand>
        <name>NADP(+)</name>
        <dbReference type="ChEBI" id="CHEBI:58349"/>
    </ligand>
</feature>
<organism>
    <name type="scientific">Frankia casuarinae (strain DSM 45818 / CECT 9043 / HFP020203 / CcI3)</name>
    <dbReference type="NCBI Taxonomy" id="106370"/>
    <lineage>
        <taxon>Bacteria</taxon>
        <taxon>Bacillati</taxon>
        <taxon>Actinomycetota</taxon>
        <taxon>Actinomycetes</taxon>
        <taxon>Frankiales</taxon>
        <taxon>Frankiaceae</taxon>
        <taxon>Frankia</taxon>
    </lineage>
</organism>
<proteinExistence type="inferred from homology"/>
<keyword id="KW-0028">Amino-acid biosynthesis</keyword>
<keyword id="KW-0368">Histidine biosynthesis</keyword>
<keyword id="KW-0378">Hydrolase</keyword>
<keyword id="KW-0486">Methionine biosynthesis</keyword>
<keyword id="KW-0511">Multifunctional enzyme</keyword>
<keyword id="KW-0521">NADP</keyword>
<keyword id="KW-0554">One-carbon metabolism</keyword>
<keyword id="KW-0560">Oxidoreductase</keyword>
<keyword id="KW-0658">Purine biosynthesis</keyword>
<keyword id="KW-1185">Reference proteome</keyword>
<gene>
    <name evidence="1" type="primary">folD2</name>
    <name type="ordered locus">Francci3_2667</name>
</gene>
<name>FOLD2_FRACC</name>
<protein>
    <recommendedName>
        <fullName evidence="1">Bifunctional protein FolD 2</fullName>
    </recommendedName>
    <domain>
        <recommendedName>
            <fullName evidence="1">Methylenetetrahydrofolate dehydrogenase</fullName>
            <ecNumber evidence="1">1.5.1.5</ecNumber>
        </recommendedName>
    </domain>
    <domain>
        <recommendedName>
            <fullName evidence="1">Methenyltetrahydrofolate cyclohydrolase</fullName>
            <ecNumber evidence="1">3.5.4.9</ecNumber>
        </recommendedName>
    </domain>
</protein>
<reference key="1">
    <citation type="journal article" date="2007" name="Genome Res.">
        <title>Genome characteristics of facultatively symbiotic Frankia sp. strains reflect host range and host plant biogeography.</title>
        <authorList>
            <person name="Normand P."/>
            <person name="Lapierre P."/>
            <person name="Tisa L.S."/>
            <person name="Gogarten J.P."/>
            <person name="Alloisio N."/>
            <person name="Bagnarol E."/>
            <person name="Bassi C.A."/>
            <person name="Berry A.M."/>
            <person name="Bickhart D.M."/>
            <person name="Choisne N."/>
            <person name="Couloux A."/>
            <person name="Cournoyer B."/>
            <person name="Cruveiller S."/>
            <person name="Daubin V."/>
            <person name="Demange N."/>
            <person name="Francino M.P."/>
            <person name="Goltsman E."/>
            <person name="Huang Y."/>
            <person name="Kopp O.R."/>
            <person name="Labarre L."/>
            <person name="Lapidus A."/>
            <person name="Lavire C."/>
            <person name="Marechal J."/>
            <person name="Martinez M."/>
            <person name="Mastronunzio J.E."/>
            <person name="Mullin B.C."/>
            <person name="Niemann J."/>
            <person name="Pujic P."/>
            <person name="Rawnsley T."/>
            <person name="Rouy Z."/>
            <person name="Schenowitz C."/>
            <person name="Sellstedt A."/>
            <person name="Tavares F."/>
            <person name="Tomkins J.P."/>
            <person name="Vallenet D."/>
            <person name="Valverde C."/>
            <person name="Wall L.G."/>
            <person name="Wang Y."/>
            <person name="Medigue C."/>
            <person name="Benson D.R."/>
        </authorList>
    </citation>
    <scope>NUCLEOTIDE SEQUENCE [LARGE SCALE GENOMIC DNA]</scope>
    <source>
        <strain>DSM 45818 / CECT 9043 / HFP020203 / CcI3</strain>
    </source>
</reference>
<dbReference type="EC" id="1.5.1.5" evidence="1"/>
<dbReference type="EC" id="3.5.4.9" evidence="1"/>
<dbReference type="EMBL" id="CP000249">
    <property type="protein sequence ID" value="ABD12029.1"/>
    <property type="molecule type" value="Genomic_DNA"/>
</dbReference>
<dbReference type="SMR" id="Q2J9L3"/>
<dbReference type="STRING" id="106370.Francci3_2667"/>
<dbReference type="KEGG" id="fra:Francci3_2667"/>
<dbReference type="eggNOG" id="COG0190">
    <property type="taxonomic scope" value="Bacteria"/>
</dbReference>
<dbReference type="HOGENOM" id="CLU_034045_2_1_11"/>
<dbReference type="OrthoDB" id="9803580at2"/>
<dbReference type="PhylomeDB" id="Q2J9L3"/>
<dbReference type="UniPathway" id="UPA00193"/>
<dbReference type="Proteomes" id="UP000001937">
    <property type="component" value="Chromosome"/>
</dbReference>
<dbReference type="GO" id="GO:0005829">
    <property type="term" value="C:cytosol"/>
    <property type="evidence" value="ECO:0007669"/>
    <property type="project" value="TreeGrafter"/>
</dbReference>
<dbReference type="GO" id="GO:0004477">
    <property type="term" value="F:methenyltetrahydrofolate cyclohydrolase activity"/>
    <property type="evidence" value="ECO:0007669"/>
    <property type="project" value="UniProtKB-UniRule"/>
</dbReference>
<dbReference type="GO" id="GO:0004488">
    <property type="term" value="F:methylenetetrahydrofolate dehydrogenase (NADP+) activity"/>
    <property type="evidence" value="ECO:0007669"/>
    <property type="project" value="UniProtKB-UniRule"/>
</dbReference>
<dbReference type="GO" id="GO:0000105">
    <property type="term" value="P:L-histidine biosynthetic process"/>
    <property type="evidence" value="ECO:0007669"/>
    <property type="project" value="UniProtKB-KW"/>
</dbReference>
<dbReference type="GO" id="GO:0009086">
    <property type="term" value="P:methionine biosynthetic process"/>
    <property type="evidence" value="ECO:0007669"/>
    <property type="project" value="UniProtKB-KW"/>
</dbReference>
<dbReference type="GO" id="GO:0006164">
    <property type="term" value="P:purine nucleotide biosynthetic process"/>
    <property type="evidence" value="ECO:0007669"/>
    <property type="project" value="UniProtKB-KW"/>
</dbReference>
<dbReference type="GO" id="GO:0035999">
    <property type="term" value="P:tetrahydrofolate interconversion"/>
    <property type="evidence" value="ECO:0007669"/>
    <property type="project" value="UniProtKB-UniRule"/>
</dbReference>
<dbReference type="CDD" id="cd01080">
    <property type="entry name" value="NAD_bind_m-THF_DH_Cyclohyd"/>
    <property type="match status" value="1"/>
</dbReference>
<dbReference type="FunFam" id="3.40.50.720:FF:000094">
    <property type="entry name" value="Bifunctional protein FolD"/>
    <property type="match status" value="1"/>
</dbReference>
<dbReference type="FunFam" id="3.40.50.10860:FF:000005">
    <property type="entry name" value="C-1-tetrahydrofolate synthase, cytoplasmic, putative"/>
    <property type="match status" value="1"/>
</dbReference>
<dbReference type="Gene3D" id="3.40.50.10860">
    <property type="entry name" value="Leucine Dehydrogenase, chain A, domain 1"/>
    <property type="match status" value="1"/>
</dbReference>
<dbReference type="Gene3D" id="3.40.50.720">
    <property type="entry name" value="NAD(P)-binding Rossmann-like Domain"/>
    <property type="match status" value="1"/>
</dbReference>
<dbReference type="HAMAP" id="MF_01576">
    <property type="entry name" value="THF_DHG_CYH"/>
    <property type="match status" value="1"/>
</dbReference>
<dbReference type="InterPro" id="IPR046346">
    <property type="entry name" value="Aminoacid_DH-like_N_sf"/>
</dbReference>
<dbReference type="InterPro" id="IPR036291">
    <property type="entry name" value="NAD(P)-bd_dom_sf"/>
</dbReference>
<dbReference type="InterPro" id="IPR000672">
    <property type="entry name" value="THF_DH/CycHdrlase"/>
</dbReference>
<dbReference type="InterPro" id="IPR020630">
    <property type="entry name" value="THF_DH/CycHdrlase_cat_dom"/>
</dbReference>
<dbReference type="InterPro" id="IPR020867">
    <property type="entry name" value="THF_DH/CycHdrlase_CS"/>
</dbReference>
<dbReference type="InterPro" id="IPR020631">
    <property type="entry name" value="THF_DH/CycHdrlase_NAD-bd_dom"/>
</dbReference>
<dbReference type="NCBIfam" id="NF010783">
    <property type="entry name" value="PRK14186.1"/>
    <property type="match status" value="1"/>
</dbReference>
<dbReference type="PANTHER" id="PTHR48099:SF5">
    <property type="entry name" value="C-1-TETRAHYDROFOLATE SYNTHASE, CYTOPLASMIC"/>
    <property type="match status" value="1"/>
</dbReference>
<dbReference type="PANTHER" id="PTHR48099">
    <property type="entry name" value="C-1-TETRAHYDROFOLATE SYNTHASE, CYTOPLASMIC-RELATED"/>
    <property type="match status" value="1"/>
</dbReference>
<dbReference type="Pfam" id="PF00763">
    <property type="entry name" value="THF_DHG_CYH"/>
    <property type="match status" value="1"/>
</dbReference>
<dbReference type="Pfam" id="PF02882">
    <property type="entry name" value="THF_DHG_CYH_C"/>
    <property type="match status" value="1"/>
</dbReference>
<dbReference type="PRINTS" id="PR00085">
    <property type="entry name" value="THFDHDRGNASE"/>
</dbReference>
<dbReference type="SUPFAM" id="SSF53223">
    <property type="entry name" value="Aminoacid dehydrogenase-like, N-terminal domain"/>
    <property type="match status" value="1"/>
</dbReference>
<dbReference type="SUPFAM" id="SSF51735">
    <property type="entry name" value="NAD(P)-binding Rossmann-fold domains"/>
    <property type="match status" value="1"/>
</dbReference>
<dbReference type="PROSITE" id="PS00767">
    <property type="entry name" value="THF_DHG_CYH_2"/>
    <property type="match status" value="1"/>
</dbReference>
<comment type="function">
    <text evidence="1">Catalyzes the oxidation of 5,10-methylenetetrahydrofolate to 5,10-methenyltetrahydrofolate and then the hydrolysis of 5,10-methenyltetrahydrofolate to 10-formyltetrahydrofolate.</text>
</comment>
<comment type="catalytic activity">
    <reaction evidence="1">
        <text>(6R)-5,10-methylene-5,6,7,8-tetrahydrofolate + NADP(+) = (6R)-5,10-methenyltetrahydrofolate + NADPH</text>
        <dbReference type="Rhea" id="RHEA:22812"/>
        <dbReference type="ChEBI" id="CHEBI:15636"/>
        <dbReference type="ChEBI" id="CHEBI:57455"/>
        <dbReference type="ChEBI" id="CHEBI:57783"/>
        <dbReference type="ChEBI" id="CHEBI:58349"/>
        <dbReference type="EC" id="1.5.1.5"/>
    </reaction>
</comment>
<comment type="catalytic activity">
    <reaction evidence="1">
        <text>(6R)-5,10-methenyltetrahydrofolate + H2O = (6R)-10-formyltetrahydrofolate + H(+)</text>
        <dbReference type="Rhea" id="RHEA:23700"/>
        <dbReference type="ChEBI" id="CHEBI:15377"/>
        <dbReference type="ChEBI" id="CHEBI:15378"/>
        <dbReference type="ChEBI" id="CHEBI:57455"/>
        <dbReference type="ChEBI" id="CHEBI:195366"/>
        <dbReference type="EC" id="3.5.4.9"/>
    </reaction>
</comment>
<comment type="pathway">
    <text evidence="1">One-carbon metabolism; tetrahydrofolate interconversion.</text>
</comment>
<comment type="subunit">
    <text evidence="1">Homodimer.</text>
</comment>
<comment type="similarity">
    <text evidence="1">Belongs to the tetrahydrofolate dehydrogenase/cyclohydrolase family.</text>
</comment>
<evidence type="ECO:0000255" key="1">
    <source>
        <dbReference type="HAMAP-Rule" id="MF_01576"/>
    </source>
</evidence>